<feature type="chain" id="PRO_0000048754" description="Transcription factor SOX-12">
    <location>
        <begin position="1"/>
        <end position="315"/>
    </location>
</feature>
<feature type="DNA-binding region" description="HMG box" evidence="2">
    <location>
        <begin position="40"/>
        <end position="108"/>
    </location>
</feature>
<feature type="region of interest" description="Disordered" evidence="3">
    <location>
        <begin position="1"/>
        <end position="40"/>
    </location>
</feature>
<feature type="region of interest" description="Disordered" evidence="3">
    <location>
        <begin position="100"/>
        <end position="288"/>
    </location>
</feature>
<feature type="region of interest" description="Required for transcriptional activation activity and synergistic coactivation of transcriptional activity with POU3F2" evidence="1">
    <location>
        <begin position="283"/>
        <end position="315"/>
    </location>
</feature>
<feature type="compositionally biased region" description="Basic and acidic residues" evidence="3">
    <location>
        <begin position="100"/>
        <end position="109"/>
    </location>
</feature>
<feature type="compositionally biased region" description="Gly residues" evidence="3">
    <location>
        <begin position="149"/>
        <end position="159"/>
    </location>
</feature>
<feature type="compositionally biased region" description="Acidic residues" evidence="3">
    <location>
        <begin position="162"/>
        <end position="173"/>
    </location>
</feature>
<feature type="compositionally biased region" description="Basic and acidic residues" evidence="3">
    <location>
        <begin position="174"/>
        <end position="187"/>
    </location>
</feature>
<feature type="compositionally biased region" description="Low complexity" evidence="3">
    <location>
        <begin position="192"/>
        <end position="221"/>
    </location>
</feature>
<feature type="compositionally biased region" description="Acidic residues" evidence="3">
    <location>
        <begin position="222"/>
        <end position="244"/>
    </location>
</feature>
<evidence type="ECO:0000250" key="1">
    <source>
        <dbReference type="UniProtKB" id="Q04890"/>
    </source>
</evidence>
<evidence type="ECO:0000255" key="2">
    <source>
        <dbReference type="PROSITE-ProRule" id="PRU00267"/>
    </source>
</evidence>
<evidence type="ECO:0000256" key="3">
    <source>
        <dbReference type="SAM" id="MobiDB-lite"/>
    </source>
</evidence>
<evidence type="ECO:0000269" key="4">
    <source>
    </source>
</evidence>
<evidence type="ECO:0000305" key="5"/>
<name>SOX12_HUMAN</name>
<proteinExistence type="evidence at protein level"/>
<organism>
    <name type="scientific">Homo sapiens</name>
    <name type="common">Human</name>
    <dbReference type="NCBI Taxonomy" id="9606"/>
    <lineage>
        <taxon>Eukaryota</taxon>
        <taxon>Metazoa</taxon>
        <taxon>Chordata</taxon>
        <taxon>Craniata</taxon>
        <taxon>Vertebrata</taxon>
        <taxon>Euteleostomi</taxon>
        <taxon>Mammalia</taxon>
        <taxon>Eutheria</taxon>
        <taxon>Euarchontoglires</taxon>
        <taxon>Primates</taxon>
        <taxon>Haplorrhini</taxon>
        <taxon>Catarrhini</taxon>
        <taxon>Hominidae</taxon>
        <taxon>Homo</taxon>
    </lineage>
</organism>
<gene>
    <name type="primary">SOX12</name>
    <name type="synonym">SOX22</name>
</gene>
<protein>
    <recommendedName>
        <fullName>Transcription factor SOX-12</fullName>
    </recommendedName>
    <alternativeName>
        <fullName>Protein SOX-22</fullName>
    </alternativeName>
</protein>
<reference key="1">
    <citation type="journal article" date="1997" name="Hum. Mol. Genet.">
        <title>SOX22 is a new member of the SOX gene family, mainly expressed in human nervous tissue.</title>
        <authorList>
            <person name="Jay P."/>
            <person name="Sahly I."/>
            <person name="Goze C."/>
            <person name="Taviaux S."/>
            <person name="Poulat F."/>
            <person name="Couly G."/>
            <person name="Abitbol M."/>
            <person name="Berta P."/>
        </authorList>
    </citation>
    <scope>NUCLEOTIDE SEQUENCE [MRNA]</scope>
    <scope>SUBCELLULAR LOCATION</scope>
    <scope>TISSUE SPECIFICITY</scope>
    <scope>DEVELOPMENTAL STAGE</scope>
    <source>
        <tissue>Fetal brain</tissue>
    </source>
</reference>
<reference key="2">
    <citation type="journal article" date="2001" name="Nature">
        <title>The DNA sequence and comparative analysis of human chromosome 20.</title>
        <authorList>
            <person name="Deloukas P."/>
            <person name="Matthews L.H."/>
            <person name="Ashurst J.L."/>
            <person name="Burton J."/>
            <person name="Gilbert J.G.R."/>
            <person name="Jones M."/>
            <person name="Stavrides G."/>
            <person name="Almeida J.P."/>
            <person name="Babbage A.K."/>
            <person name="Bagguley C.L."/>
            <person name="Bailey J."/>
            <person name="Barlow K.F."/>
            <person name="Bates K.N."/>
            <person name="Beard L.M."/>
            <person name="Beare D.M."/>
            <person name="Beasley O.P."/>
            <person name="Bird C.P."/>
            <person name="Blakey S.E."/>
            <person name="Bridgeman A.M."/>
            <person name="Brown A.J."/>
            <person name="Buck D."/>
            <person name="Burrill W.D."/>
            <person name="Butler A.P."/>
            <person name="Carder C."/>
            <person name="Carter N.P."/>
            <person name="Chapman J.C."/>
            <person name="Clamp M."/>
            <person name="Clark G."/>
            <person name="Clark L.N."/>
            <person name="Clark S.Y."/>
            <person name="Clee C.M."/>
            <person name="Clegg S."/>
            <person name="Cobley V.E."/>
            <person name="Collier R.E."/>
            <person name="Connor R.E."/>
            <person name="Corby N.R."/>
            <person name="Coulson A."/>
            <person name="Coville G.J."/>
            <person name="Deadman R."/>
            <person name="Dhami P.D."/>
            <person name="Dunn M."/>
            <person name="Ellington A.G."/>
            <person name="Frankland J.A."/>
            <person name="Fraser A."/>
            <person name="French L."/>
            <person name="Garner P."/>
            <person name="Grafham D.V."/>
            <person name="Griffiths C."/>
            <person name="Griffiths M.N.D."/>
            <person name="Gwilliam R."/>
            <person name="Hall R.E."/>
            <person name="Hammond S."/>
            <person name="Harley J.L."/>
            <person name="Heath P.D."/>
            <person name="Ho S."/>
            <person name="Holden J.L."/>
            <person name="Howden P.J."/>
            <person name="Huckle E."/>
            <person name="Hunt A.R."/>
            <person name="Hunt S.E."/>
            <person name="Jekosch K."/>
            <person name="Johnson C.M."/>
            <person name="Johnson D."/>
            <person name="Kay M.P."/>
            <person name="Kimberley A.M."/>
            <person name="King A."/>
            <person name="Knights A."/>
            <person name="Laird G.K."/>
            <person name="Lawlor S."/>
            <person name="Lehvaeslaiho M.H."/>
            <person name="Leversha M.A."/>
            <person name="Lloyd C."/>
            <person name="Lloyd D.M."/>
            <person name="Lovell J.D."/>
            <person name="Marsh V.L."/>
            <person name="Martin S.L."/>
            <person name="McConnachie L.J."/>
            <person name="McLay K."/>
            <person name="McMurray A.A."/>
            <person name="Milne S.A."/>
            <person name="Mistry D."/>
            <person name="Moore M.J.F."/>
            <person name="Mullikin J.C."/>
            <person name="Nickerson T."/>
            <person name="Oliver K."/>
            <person name="Parker A."/>
            <person name="Patel R."/>
            <person name="Pearce T.A.V."/>
            <person name="Peck A.I."/>
            <person name="Phillimore B.J.C.T."/>
            <person name="Prathalingam S.R."/>
            <person name="Plumb R.W."/>
            <person name="Ramsay H."/>
            <person name="Rice C.M."/>
            <person name="Ross M.T."/>
            <person name="Scott C.E."/>
            <person name="Sehra H.K."/>
            <person name="Shownkeen R."/>
            <person name="Sims S."/>
            <person name="Skuce C.D."/>
            <person name="Smith M.L."/>
            <person name="Soderlund C."/>
            <person name="Steward C.A."/>
            <person name="Sulston J.E."/>
            <person name="Swann R.M."/>
            <person name="Sycamore N."/>
            <person name="Taylor R."/>
            <person name="Tee L."/>
            <person name="Thomas D.W."/>
            <person name="Thorpe A."/>
            <person name="Tracey A."/>
            <person name="Tromans A.C."/>
            <person name="Vaudin M."/>
            <person name="Wall M."/>
            <person name="Wallis J.M."/>
            <person name="Whitehead S.L."/>
            <person name="Whittaker P."/>
            <person name="Willey D.L."/>
            <person name="Williams L."/>
            <person name="Williams S.A."/>
            <person name="Wilming L."/>
            <person name="Wray P.W."/>
            <person name="Hubbard T."/>
            <person name="Durbin R.M."/>
            <person name="Bentley D.R."/>
            <person name="Beck S."/>
            <person name="Rogers J."/>
        </authorList>
    </citation>
    <scope>NUCLEOTIDE SEQUENCE [LARGE SCALE GENOMIC DNA]</scope>
</reference>
<reference key="3">
    <citation type="journal article" date="2004" name="Genome Res.">
        <title>The status, quality, and expansion of the NIH full-length cDNA project: the Mammalian Gene Collection (MGC).</title>
        <authorList>
            <consortium name="The MGC Project Team"/>
        </authorList>
    </citation>
    <scope>NUCLEOTIDE SEQUENCE [LARGE SCALE MRNA]</scope>
    <source>
        <tissue>Prostate</tissue>
    </source>
</reference>
<comment type="function">
    <text evidence="1">Transcription factor that binds to DNA at the consensus sequence 5'-ACCAAAG-3' (By similarity). Acts as a transcriptional activator (By similarity). Binds cooperatively with POU3F2/BRN2 or POU3F1/OCT6 to gene promoters, which enhances transcriptional activation (By similarity). Involved in the differentiation of naive CD4-positive T-cells into peripherally induced regulatory T (pT reg) cells under inflammatory conditions (By similarity). Binds to the promoter region of the FOXP3 gene and promotes its transcription, and might thereby contribute to pT reg cell differentiation in the spleen and lymph nodes during inflammation (By similarity). Plays a redundant role with SOX4 and SOX11 in cell survival of developing tissues such as the neural tube, branchial arches and somites, thereby contributing to organogenesis (By similarity).</text>
</comment>
<comment type="subcellular location">
    <subcellularLocation>
        <location evidence="2 4">Nucleus</location>
    </subcellularLocation>
</comment>
<comment type="tissue specificity">
    <text evidence="4">Expressed most abundantly in the CNS (PubMed:9215677). Expressed in the heart, pancreas, thymus, testis and ovary (PubMed:9215677). Weakly expressed in brain, placenta, lung, liver, skeletal muscle, kidney, spleen, prostate, small intestine, colon, and peripheral blood lymphocytes (PubMed:9215677).</text>
</comment>
<comment type="developmental stage">
    <text evidence="4">Expressed in the fetal brain, lung, liver, and kidney.</text>
</comment>
<comment type="sequence caution" evidence="5">
    <conflict type="frameshift">
        <sequence resource="EMBL-CDS" id="AAB69627"/>
    </conflict>
</comment>
<sequence>MVQQRGARAKRDGGPPPPGPGPAEEGAREPGWCKTPSGHIKRPMNAFMVWSQHERRKIMDQWPDMHNAEISKRLGRRWQLLQDSEKIPFVREAERLRLKHMADYPDYKYRPRKKSKGAPAKARPRPPGGSGGGSRLKPGPQLPGRGGRRAAGGPLGGGAAAPEDDDEDDDEELLEVRLVETPGRELWRMVPAGRAARGQAERAQGPSGEGAAAAAAASPTPSEDEEPEEEEEEAAAAEEGEEETVASGEESLGFLSRLPPGPAGLDCSALDRDPDLQPPSGTSHFEFPDYCTPEVTEMIAGDWRPSSIADLVFTY</sequence>
<keyword id="KW-0010">Activator</keyword>
<keyword id="KW-0238">DNA-binding</keyword>
<keyword id="KW-0539">Nucleus</keyword>
<keyword id="KW-1267">Proteomics identification</keyword>
<keyword id="KW-1185">Reference proteome</keyword>
<keyword id="KW-0804">Transcription</keyword>
<keyword id="KW-0805">Transcription regulation</keyword>
<dbReference type="EMBL" id="U35612">
    <property type="protein sequence ID" value="AAB69627.1"/>
    <property type="status" value="ALT_FRAME"/>
    <property type="molecule type" value="mRNA"/>
</dbReference>
<dbReference type="EMBL" id="AL034548">
    <property type="status" value="NOT_ANNOTATED_CDS"/>
    <property type="molecule type" value="Genomic_DNA"/>
</dbReference>
<dbReference type="EMBL" id="BC067361">
    <property type="protein sequence ID" value="AAH67361.1"/>
    <property type="molecule type" value="mRNA"/>
</dbReference>
<dbReference type="CCDS" id="CCDS12995.1"/>
<dbReference type="RefSeq" id="NP_008874.2">
    <property type="nucleotide sequence ID" value="NM_006943.3"/>
</dbReference>
<dbReference type="SMR" id="O15370"/>
<dbReference type="BioGRID" id="112549">
    <property type="interactions" value="12"/>
</dbReference>
<dbReference type="FunCoup" id="O15370">
    <property type="interactions" value="600"/>
</dbReference>
<dbReference type="IntAct" id="O15370">
    <property type="interactions" value="6"/>
</dbReference>
<dbReference type="STRING" id="9606.ENSP00000347646"/>
<dbReference type="GlyGen" id="O15370">
    <property type="glycosylation" value="1 site"/>
</dbReference>
<dbReference type="iPTMnet" id="O15370"/>
<dbReference type="PhosphoSitePlus" id="O15370"/>
<dbReference type="BioMuta" id="SOX12"/>
<dbReference type="jPOST" id="O15370"/>
<dbReference type="MassIVE" id="O15370"/>
<dbReference type="PaxDb" id="9606-ENSP00000347646"/>
<dbReference type="PeptideAtlas" id="O15370"/>
<dbReference type="ProteomicsDB" id="48613"/>
<dbReference type="Pumba" id="O15370"/>
<dbReference type="Antibodypedia" id="6130">
    <property type="antibodies" value="245 antibodies from 33 providers"/>
</dbReference>
<dbReference type="DNASU" id="6666"/>
<dbReference type="Ensembl" id="ENST00000342665.5">
    <property type="protein sequence ID" value="ENSP00000347646.1"/>
    <property type="gene ID" value="ENSG00000177732.9"/>
</dbReference>
<dbReference type="GeneID" id="6666"/>
<dbReference type="KEGG" id="hsa:6666"/>
<dbReference type="MANE-Select" id="ENST00000342665.5">
    <property type="protein sequence ID" value="ENSP00000347646.1"/>
    <property type="RefSeq nucleotide sequence ID" value="NM_006943.4"/>
    <property type="RefSeq protein sequence ID" value="NP_008874.2"/>
</dbReference>
<dbReference type="UCSC" id="uc002wdh.5">
    <property type="organism name" value="human"/>
</dbReference>
<dbReference type="AGR" id="HGNC:11198"/>
<dbReference type="CTD" id="6666"/>
<dbReference type="DisGeNET" id="6666"/>
<dbReference type="GeneCards" id="SOX12"/>
<dbReference type="HGNC" id="HGNC:11198">
    <property type="gene designation" value="SOX12"/>
</dbReference>
<dbReference type="HPA" id="ENSG00000177732">
    <property type="expression patterns" value="Low tissue specificity"/>
</dbReference>
<dbReference type="MIM" id="601947">
    <property type="type" value="gene"/>
</dbReference>
<dbReference type="neXtProt" id="NX_O15370"/>
<dbReference type="OpenTargets" id="ENSG00000177732"/>
<dbReference type="PharmGKB" id="PA36035"/>
<dbReference type="VEuPathDB" id="HostDB:ENSG00000177732"/>
<dbReference type="eggNOG" id="KOG0527">
    <property type="taxonomic scope" value="Eukaryota"/>
</dbReference>
<dbReference type="GeneTree" id="ENSGT00940000163140"/>
<dbReference type="HOGENOM" id="CLU_043342_0_0_1"/>
<dbReference type="InParanoid" id="O15370"/>
<dbReference type="OMA" id="CGTPDWS"/>
<dbReference type="OrthoDB" id="6247875at2759"/>
<dbReference type="PAN-GO" id="O15370">
    <property type="GO annotations" value="5 GO annotations based on evolutionary models"/>
</dbReference>
<dbReference type="PhylomeDB" id="O15370"/>
<dbReference type="TreeFam" id="TF351735"/>
<dbReference type="PathwayCommons" id="O15370"/>
<dbReference type="SignaLink" id="O15370"/>
<dbReference type="BioGRID-ORCS" id="6666">
    <property type="hits" value="32 hits in 1187 CRISPR screens"/>
</dbReference>
<dbReference type="ChiTaRS" id="SOX12">
    <property type="organism name" value="human"/>
</dbReference>
<dbReference type="GeneWiki" id="SOX12"/>
<dbReference type="GenomeRNAi" id="6666"/>
<dbReference type="Pharos" id="O15370">
    <property type="development level" value="Tbio"/>
</dbReference>
<dbReference type="PRO" id="PR:O15370"/>
<dbReference type="Proteomes" id="UP000005640">
    <property type="component" value="Chromosome 20"/>
</dbReference>
<dbReference type="RNAct" id="O15370">
    <property type="molecule type" value="protein"/>
</dbReference>
<dbReference type="Bgee" id="ENSG00000177732">
    <property type="expression patterns" value="Expressed in cortical plate and 146 other cell types or tissues"/>
</dbReference>
<dbReference type="GO" id="GO:0000785">
    <property type="term" value="C:chromatin"/>
    <property type="evidence" value="ECO:0000247"/>
    <property type="project" value="NTNU_SB"/>
</dbReference>
<dbReference type="GO" id="GO:0005654">
    <property type="term" value="C:nucleoplasm"/>
    <property type="evidence" value="ECO:0000314"/>
    <property type="project" value="HPA"/>
</dbReference>
<dbReference type="GO" id="GO:0005634">
    <property type="term" value="C:nucleus"/>
    <property type="evidence" value="ECO:0000318"/>
    <property type="project" value="GO_Central"/>
</dbReference>
<dbReference type="GO" id="GO:0032993">
    <property type="term" value="C:protein-DNA complex"/>
    <property type="evidence" value="ECO:0007669"/>
    <property type="project" value="Ensembl"/>
</dbReference>
<dbReference type="GO" id="GO:0003677">
    <property type="term" value="F:DNA binding"/>
    <property type="evidence" value="ECO:0000250"/>
    <property type="project" value="UniProtKB"/>
</dbReference>
<dbReference type="GO" id="GO:0001228">
    <property type="term" value="F:DNA-binding transcription activator activity, RNA polymerase II-specific"/>
    <property type="evidence" value="ECO:0000250"/>
    <property type="project" value="UniProtKB"/>
</dbReference>
<dbReference type="GO" id="GO:0000981">
    <property type="term" value="F:DNA-binding transcription factor activity, RNA polymerase II-specific"/>
    <property type="evidence" value="ECO:0000247"/>
    <property type="project" value="NTNU_SB"/>
</dbReference>
<dbReference type="GO" id="GO:0000978">
    <property type="term" value="F:RNA polymerase II cis-regulatory region sequence-specific DNA binding"/>
    <property type="evidence" value="ECO:0000318"/>
    <property type="project" value="GO_Central"/>
</dbReference>
<dbReference type="GO" id="GO:1990837">
    <property type="term" value="F:sequence-specific double-stranded DNA binding"/>
    <property type="evidence" value="ECO:0000314"/>
    <property type="project" value="ARUK-UCL"/>
</dbReference>
<dbReference type="GO" id="GO:0000976">
    <property type="term" value="F:transcription cis-regulatory region binding"/>
    <property type="evidence" value="ECO:0000250"/>
    <property type="project" value="UniProtKB"/>
</dbReference>
<dbReference type="GO" id="GO:0007420">
    <property type="term" value="P:brain development"/>
    <property type="evidence" value="ECO:0000318"/>
    <property type="project" value="GO_Central"/>
</dbReference>
<dbReference type="GO" id="GO:0048593">
    <property type="term" value="P:camera-type eye morphogenesis"/>
    <property type="evidence" value="ECO:0000318"/>
    <property type="project" value="GO_Central"/>
</dbReference>
<dbReference type="GO" id="GO:0000122">
    <property type="term" value="P:negative regulation of transcription by RNA polymerase II"/>
    <property type="evidence" value="ECO:0000318"/>
    <property type="project" value="GO_Central"/>
</dbReference>
<dbReference type="GO" id="GO:0030182">
    <property type="term" value="P:neuron differentiation"/>
    <property type="evidence" value="ECO:0000318"/>
    <property type="project" value="GO_Central"/>
</dbReference>
<dbReference type="GO" id="GO:0045591">
    <property type="term" value="P:positive regulation of regulatory T cell differentiation"/>
    <property type="evidence" value="ECO:0000250"/>
    <property type="project" value="UniProtKB"/>
</dbReference>
<dbReference type="GO" id="GO:0045944">
    <property type="term" value="P:positive regulation of transcription by RNA polymerase II"/>
    <property type="evidence" value="ECO:0000250"/>
    <property type="project" value="UniProtKB"/>
</dbReference>
<dbReference type="GO" id="GO:0021510">
    <property type="term" value="P:spinal cord development"/>
    <property type="evidence" value="ECO:0000250"/>
    <property type="project" value="UniProtKB"/>
</dbReference>
<dbReference type="FunFam" id="1.10.30.10:FF:000007">
    <property type="entry name" value="Transcription factor SOX"/>
    <property type="match status" value="1"/>
</dbReference>
<dbReference type="Gene3D" id="1.10.30.10">
    <property type="entry name" value="High mobility group box domain"/>
    <property type="match status" value="1"/>
</dbReference>
<dbReference type="InterPro" id="IPR009071">
    <property type="entry name" value="HMG_box_dom"/>
</dbReference>
<dbReference type="InterPro" id="IPR036910">
    <property type="entry name" value="HMG_box_dom_sf"/>
</dbReference>
<dbReference type="InterPro" id="IPR017386">
    <property type="entry name" value="SOX-12/11/4"/>
</dbReference>
<dbReference type="InterPro" id="IPR050140">
    <property type="entry name" value="SRY-related_HMG-box_TF-like"/>
</dbReference>
<dbReference type="PANTHER" id="PTHR10270">
    <property type="entry name" value="SOX TRANSCRIPTION FACTOR"/>
    <property type="match status" value="1"/>
</dbReference>
<dbReference type="PANTHER" id="PTHR10270:SF221">
    <property type="entry name" value="TRANSCRIPTION FACTOR SOX-12"/>
    <property type="match status" value="1"/>
</dbReference>
<dbReference type="Pfam" id="PF00505">
    <property type="entry name" value="HMG_box"/>
    <property type="match status" value="1"/>
</dbReference>
<dbReference type="PIRSF" id="PIRSF038098">
    <property type="entry name" value="SOX-12/11/4a"/>
    <property type="match status" value="1"/>
</dbReference>
<dbReference type="SMART" id="SM00398">
    <property type="entry name" value="HMG"/>
    <property type="match status" value="1"/>
</dbReference>
<dbReference type="SUPFAM" id="SSF47095">
    <property type="entry name" value="HMG-box"/>
    <property type="match status" value="1"/>
</dbReference>
<dbReference type="PROSITE" id="PS50118">
    <property type="entry name" value="HMG_BOX_2"/>
    <property type="match status" value="1"/>
</dbReference>
<accession>O15370</accession>
<accession>Q5D038</accession>
<accession>Q9NUD4</accession>